<keyword id="KW-0021">Allosteric enzyme</keyword>
<keyword id="KW-0328">Glycosyltransferase</keyword>
<keyword id="KW-0342">GTP-binding</keyword>
<keyword id="KW-0460">Magnesium</keyword>
<keyword id="KW-0547">Nucleotide-binding</keyword>
<keyword id="KW-0808">Transferase</keyword>
<comment type="function">
    <text evidence="1">Catalyzes the conversion of uracil and 5-phospho-alpha-D-ribose 1-diphosphate (PRPP) to UMP and diphosphate.</text>
</comment>
<comment type="catalytic activity">
    <reaction evidence="1">
        <text>UMP + diphosphate = 5-phospho-alpha-D-ribose 1-diphosphate + uracil</text>
        <dbReference type="Rhea" id="RHEA:13017"/>
        <dbReference type="ChEBI" id="CHEBI:17568"/>
        <dbReference type="ChEBI" id="CHEBI:33019"/>
        <dbReference type="ChEBI" id="CHEBI:57865"/>
        <dbReference type="ChEBI" id="CHEBI:58017"/>
        <dbReference type="EC" id="2.4.2.9"/>
    </reaction>
</comment>
<comment type="cofactor">
    <cofactor evidence="1">
        <name>Mg(2+)</name>
        <dbReference type="ChEBI" id="CHEBI:18420"/>
    </cofactor>
    <text evidence="1">Binds 1 Mg(2+) ion per subunit. The magnesium is bound as Mg-PRPP.</text>
</comment>
<comment type="activity regulation">
    <text evidence="1">Allosterically activated by GTP.</text>
</comment>
<comment type="pathway">
    <text evidence="1">Pyrimidine metabolism; UMP biosynthesis via salvage pathway; UMP from uracil: step 1/1.</text>
</comment>
<comment type="similarity">
    <text evidence="1">Belongs to the UPRTase family.</text>
</comment>
<gene>
    <name evidence="1" type="primary">upp</name>
    <name type="ordered locus">YPDSF_2177</name>
</gene>
<accession>A4TMP2</accession>
<reference key="1">
    <citation type="submission" date="2007-02" db="EMBL/GenBank/DDBJ databases">
        <title>Complete sequence of chromosome of Yersinia pestis Pestoides F.</title>
        <authorList>
            <consortium name="US DOE Joint Genome Institute"/>
            <person name="Copeland A."/>
            <person name="Lucas S."/>
            <person name="Lapidus A."/>
            <person name="Barry K."/>
            <person name="Detter J.C."/>
            <person name="Glavina del Rio T."/>
            <person name="Hammon N."/>
            <person name="Israni S."/>
            <person name="Dalin E."/>
            <person name="Tice H."/>
            <person name="Pitluck S."/>
            <person name="Di Bartolo G."/>
            <person name="Chain P."/>
            <person name="Malfatti S."/>
            <person name="Shin M."/>
            <person name="Vergez L."/>
            <person name="Schmutz J."/>
            <person name="Larimer F."/>
            <person name="Land M."/>
            <person name="Hauser L."/>
            <person name="Worsham P."/>
            <person name="Chu M."/>
            <person name="Bearden S."/>
            <person name="Garcia E."/>
            <person name="Richardson P."/>
        </authorList>
    </citation>
    <scope>NUCLEOTIDE SEQUENCE [LARGE SCALE GENOMIC DNA]</scope>
    <source>
        <strain>Pestoides F</strain>
    </source>
</reference>
<proteinExistence type="inferred from homology"/>
<protein>
    <recommendedName>
        <fullName evidence="1">Uracil phosphoribosyltransferase</fullName>
        <ecNumber evidence="1">2.4.2.9</ecNumber>
    </recommendedName>
    <alternativeName>
        <fullName evidence="1">UMP pyrophosphorylase</fullName>
    </alternativeName>
    <alternativeName>
        <fullName evidence="1">UPRTase</fullName>
    </alternativeName>
</protein>
<feature type="chain" id="PRO_1000053816" description="Uracil phosphoribosyltransferase">
    <location>
        <begin position="1"/>
        <end position="208"/>
    </location>
</feature>
<feature type="binding site" evidence="1">
    <location>
        <position position="78"/>
    </location>
    <ligand>
        <name>5-phospho-alpha-D-ribose 1-diphosphate</name>
        <dbReference type="ChEBI" id="CHEBI:58017"/>
    </ligand>
</feature>
<feature type="binding site" evidence="1">
    <location>
        <position position="103"/>
    </location>
    <ligand>
        <name>5-phospho-alpha-D-ribose 1-diphosphate</name>
        <dbReference type="ChEBI" id="CHEBI:58017"/>
    </ligand>
</feature>
<feature type="binding site" evidence="1">
    <location>
        <begin position="130"/>
        <end position="138"/>
    </location>
    <ligand>
        <name>5-phospho-alpha-D-ribose 1-diphosphate</name>
        <dbReference type="ChEBI" id="CHEBI:58017"/>
    </ligand>
</feature>
<feature type="binding site" evidence="1">
    <location>
        <position position="193"/>
    </location>
    <ligand>
        <name>uracil</name>
        <dbReference type="ChEBI" id="CHEBI:17568"/>
    </ligand>
</feature>
<feature type="binding site" evidence="1">
    <location>
        <begin position="198"/>
        <end position="200"/>
    </location>
    <ligand>
        <name>uracil</name>
        <dbReference type="ChEBI" id="CHEBI:17568"/>
    </ligand>
</feature>
<feature type="binding site" evidence="1">
    <location>
        <position position="199"/>
    </location>
    <ligand>
        <name>5-phospho-alpha-D-ribose 1-diphosphate</name>
        <dbReference type="ChEBI" id="CHEBI:58017"/>
    </ligand>
</feature>
<name>UPP_YERPP</name>
<sequence length="208" mass="22574">MKIVEVKHPLVKHKLGLMRENDISTKRFRELASEVGSLLTYVATADLETETVTIEGWNGPVEIEQIKGKKITVVPILRAGLGMMEGVLENVPSARISVVGVYRDEETLKPVPYFQKLVSNINERMALVVDPMLATGGSMIATIDLLKKAGCQSIKVLVLVAAPEGIKALEEAHPDVELYTASIDQGLNEHGYIIPGLGDAGDKIFGTK</sequence>
<organism>
    <name type="scientific">Yersinia pestis (strain Pestoides F)</name>
    <dbReference type="NCBI Taxonomy" id="386656"/>
    <lineage>
        <taxon>Bacteria</taxon>
        <taxon>Pseudomonadati</taxon>
        <taxon>Pseudomonadota</taxon>
        <taxon>Gammaproteobacteria</taxon>
        <taxon>Enterobacterales</taxon>
        <taxon>Yersiniaceae</taxon>
        <taxon>Yersinia</taxon>
    </lineage>
</organism>
<evidence type="ECO:0000255" key="1">
    <source>
        <dbReference type="HAMAP-Rule" id="MF_01218"/>
    </source>
</evidence>
<dbReference type="EC" id="2.4.2.9" evidence="1"/>
<dbReference type="EMBL" id="CP000668">
    <property type="protein sequence ID" value="ABP40554.1"/>
    <property type="molecule type" value="Genomic_DNA"/>
</dbReference>
<dbReference type="RefSeq" id="WP_002209776.1">
    <property type="nucleotide sequence ID" value="NZ_CP009715.1"/>
</dbReference>
<dbReference type="SMR" id="A4TMP2"/>
<dbReference type="GeneID" id="96666287"/>
<dbReference type="KEGG" id="ypp:YPDSF_2177"/>
<dbReference type="PATRIC" id="fig|386656.14.peg.3657"/>
<dbReference type="UniPathway" id="UPA00574">
    <property type="reaction ID" value="UER00636"/>
</dbReference>
<dbReference type="GO" id="GO:0005525">
    <property type="term" value="F:GTP binding"/>
    <property type="evidence" value="ECO:0007669"/>
    <property type="project" value="UniProtKB-KW"/>
</dbReference>
<dbReference type="GO" id="GO:0000287">
    <property type="term" value="F:magnesium ion binding"/>
    <property type="evidence" value="ECO:0007669"/>
    <property type="project" value="UniProtKB-UniRule"/>
</dbReference>
<dbReference type="GO" id="GO:0004845">
    <property type="term" value="F:uracil phosphoribosyltransferase activity"/>
    <property type="evidence" value="ECO:0007669"/>
    <property type="project" value="UniProtKB-UniRule"/>
</dbReference>
<dbReference type="GO" id="GO:0044206">
    <property type="term" value="P:UMP salvage"/>
    <property type="evidence" value="ECO:0007669"/>
    <property type="project" value="UniProtKB-UniRule"/>
</dbReference>
<dbReference type="GO" id="GO:0006223">
    <property type="term" value="P:uracil salvage"/>
    <property type="evidence" value="ECO:0007669"/>
    <property type="project" value="InterPro"/>
</dbReference>
<dbReference type="CDD" id="cd06223">
    <property type="entry name" value="PRTases_typeI"/>
    <property type="match status" value="1"/>
</dbReference>
<dbReference type="FunFam" id="3.40.50.2020:FF:000003">
    <property type="entry name" value="Uracil phosphoribosyltransferase"/>
    <property type="match status" value="1"/>
</dbReference>
<dbReference type="Gene3D" id="3.40.50.2020">
    <property type="match status" value="1"/>
</dbReference>
<dbReference type="HAMAP" id="MF_01218_B">
    <property type="entry name" value="Upp_B"/>
    <property type="match status" value="1"/>
</dbReference>
<dbReference type="InterPro" id="IPR000836">
    <property type="entry name" value="PRibTrfase_dom"/>
</dbReference>
<dbReference type="InterPro" id="IPR029057">
    <property type="entry name" value="PRTase-like"/>
</dbReference>
<dbReference type="InterPro" id="IPR034332">
    <property type="entry name" value="Upp_B"/>
</dbReference>
<dbReference type="InterPro" id="IPR050054">
    <property type="entry name" value="UPRTase/APRTase"/>
</dbReference>
<dbReference type="InterPro" id="IPR005765">
    <property type="entry name" value="Ura_phspho_trans"/>
</dbReference>
<dbReference type="NCBIfam" id="NF001097">
    <property type="entry name" value="PRK00129.1"/>
    <property type="match status" value="1"/>
</dbReference>
<dbReference type="NCBIfam" id="TIGR01091">
    <property type="entry name" value="upp"/>
    <property type="match status" value="1"/>
</dbReference>
<dbReference type="PANTHER" id="PTHR32315">
    <property type="entry name" value="ADENINE PHOSPHORIBOSYLTRANSFERASE"/>
    <property type="match status" value="1"/>
</dbReference>
<dbReference type="PANTHER" id="PTHR32315:SF4">
    <property type="entry name" value="URACIL PHOSPHORIBOSYLTRANSFERASE, CHLOROPLASTIC"/>
    <property type="match status" value="1"/>
</dbReference>
<dbReference type="Pfam" id="PF14681">
    <property type="entry name" value="UPRTase"/>
    <property type="match status" value="1"/>
</dbReference>
<dbReference type="SUPFAM" id="SSF53271">
    <property type="entry name" value="PRTase-like"/>
    <property type="match status" value="1"/>
</dbReference>